<organism>
    <name type="scientific">Nitratidesulfovibrio vulgaris (strain ATCC 29579 / DSM 644 / CCUG 34227 / NCIMB 8303 / VKM B-1760 / Hildenborough)</name>
    <name type="common">Desulfovibrio vulgaris</name>
    <dbReference type="NCBI Taxonomy" id="882"/>
    <lineage>
        <taxon>Bacteria</taxon>
        <taxon>Pseudomonadati</taxon>
        <taxon>Thermodesulfobacteriota</taxon>
        <taxon>Desulfovibrionia</taxon>
        <taxon>Desulfovibrionales</taxon>
        <taxon>Desulfovibrionaceae</taxon>
        <taxon>Nitratidesulfovibrio</taxon>
    </lineage>
</organism>
<reference key="1">
    <citation type="journal article" date="2004" name="Nat. Biotechnol.">
        <title>The genome sequence of the anaerobic, sulfate-reducing bacterium Desulfovibrio vulgaris Hildenborough.</title>
        <authorList>
            <person name="Heidelberg J.F."/>
            <person name="Seshadri R."/>
            <person name="Haveman S.A."/>
            <person name="Hemme C.L."/>
            <person name="Paulsen I.T."/>
            <person name="Kolonay J.F."/>
            <person name="Eisen J.A."/>
            <person name="Ward N.L."/>
            <person name="Methe B.A."/>
            <person name="Brinkac L.M."/>
            <person name="Daugherty S.C."/>
            <person name="DeBoy R.T."/>
            <person name="Dodson R.J."/>
            <person name="Durkin A.S."/>
            <person name="Madupu R."/>
            <person name="Nelson W.C."/>
            <person name="Sullivan S.A."/>
            <person name="Fouts D.E."/>
            <person name="Haft D.H."/>
            <person name="Selengut J."/>
            <person name="Peterson J.D."/>
            <person name="Davidsen T.M."/>
            <person name="Zafar N."/>
            <person name="Zhou L."/>
            <person name="Radune D."/>
            <person name="Dimitrov G."/>
            <person name="Hance M."/>
            <person name="Tran K."/>
            <person name="Khouri H.M."/>
            <person name="Gill J."/>
            <person name="Utterback T.R."/>
            <person name="Feldblyum T.V."/>
            <person name="Wall J.D."/>
            <person name="Voordouw G."/>
            <person name="Fraser C.M."/>
        </authorList>
    </citation>
    <scope>NUCLEOTIDE SEQUENCE [LARGE SCALE GENOMIC DNA]</scope>
    <source>
        <strain>ATCC 29579 / DSM 644 / CCUG 34227 / NCIMB 8303 / VKM B-1760 / Hildenborough</strain>
    </source>
</reference>
<name>HEM3_NITV2</name>
<protein>
    <recommendedName>
        <fullName evidence="1">Porphobilinogen deaminase</fullName>
        <shortName evidence="1">PBG</shortName>
        <ecNumber evidence="1">2.5.1.61</ecNumber>
    </recommendedName>
    <alternativeName>
        <fullName evidence="1">Hydroxymethylbilane synthase</fullName>
        <shortName evidence="1">HMBS</shortName>
    </alternativeName>
    <alternativeName>
        <fullName evidence="1">Pre-uroporphyrinogen synthase</fullName>
    </alternativeName>
</protein>
<proteinExistence type="inferred from homology"/>
<evidence type="ECO:0000255" key="1">
    <source>
        <dbReference type="HAMAP-Rule" id="MF_00260"/>
    </source>
</evidence>
<sequence length="315" mass="34040">MKHLVIATRGSKLALWQAEHIKSLIETEHAGKVDVSLKIIKTKGDIILDVPLAKVGGKGLFVKEIEEALLDGSADLAVHSMKDVPMELPEGLFLGCIPEREEPSDTLLSVRYASLDALPHGARVGTSSLRRQSQLLALRPDLDIISLRGNVDTRLRKLMDGEFDAIVMATAGLKRLGLAAPHHEVLAPPRFLPAVGQGALGIEFREDRADLRDMLAFLDHRPTRIRVEAERGFLAGLEGGCQVPIAGHAVMTGDDNFRIEGLVADLKGERVIRRTLEGTGANARNRGLELASQVLADGAAEILDEVYASGAADRQ</sequence>
<gene>
    <name evidence="1" type="primary">hemC</name>
    <name type="ordered locus">DVU_1890</name>
</gene>
<keyword id="KW-0627">Porphyrin biosynthesis</keyword>
<keyword id="KW-1185">Reference proteome</keyword>
<keyword id="KW-0808">Transferase</keyword>
<comment type="function">
    <text evidence="1">Tetrapolymerization of the monopyrrole PBG into the hydroxymethylbilane pre-uroporphyrinogen in several discrete steps.</text>
</comment>
<comment type="catalytic activity">
    <reaction evidence="1">
        <text>4 porphobilinogen + H2O = hydroxymethylbilane + 4 NH4(+)</text>
        <dbReference type="Rhea" id="RHEA:13185"/>
        <dbReference type="ChEBI" id="CHEBI:15377"/>
        <dbReference type="ChEBI" id="CHEBI:28938"/>
        <dbReference type="ChEBI" id="CHEBI:57845"/>
        <dbReference type="ChEBI" id="CHEBI:58126"/>
        <dbReference type="EC" id="2.5.1.61"/>
    </reaction>
</comment>
<comment type="cofactor">
    <cofactor evidence="1">
        <name>dipyrromethane</name>
        <dbReference type="ChEBI" id="CHEBI:60342"/>
    </cofactor>
    <text evidence="1">Binds 1 dipyrromethane group covalently.</text>
</comment>
<comment type="pathway">
    <text evidence="1">Porphyrin-containing compound metabolism; protoporphyrin-IX biosynthesis; coproporphyrinogen-III from 5-aminolevulinate: step 2/4.</text>
</comment>
<comment type="subunit">
    <text evidence="1">Monomer.</text>
</comment>
<comment type="miscellaneous">
    <text evidence="1">The porphobilinogen subunits are added to the dipyrromethane group.</text>
</comment>
<comment type="similarity">
    <text evidence="1">Belongs to the HMBS family.</text>
</comment>
<dbReference type="EC" id="2.5.1.61" evidence="1"/>
<dbReference type="EMBL" id="AE017285">
    <property type="protein sequence ID" value="AAS96366.1"/>
    <property type="molecule type" value="Genomic_DNA"/>
</dbReference>
<dbReference type="RefSeq" id="WP_010939176.1">
    <property type="nucleotide sequence ID" value="NC_002937.3"/>
</dbReference>
<dbReference type="RefSeq" id="YP_011107.1">
    <property type="nucleotide sequence ID" value="NC_002937.3"/>
</dbReference>
<dbReference type="SMR" id="Q72AV0"/>
<dbReference type="STRING" id="882.DVU_1890"/>
<dbReference type="PaxDb" id="882-DVU_1890"/>
<dbReference type="EnsemblBacteria" id="AAS96366">
    <property type="protein sequence ID" value="AAS96366"/>
    <property type="gene ID" value="DVU_1890"/>
</dbReference>
<dbReference type="KEGG" id="dvu:DVU_1890"/>
<dbReference type="PATRIC" id="fig|882.5.peg.1733"/>
<dbReference type="eggNOG" id="COG0181">
    <property type="taxonomic scope" value="Bacteria"/>
</dbReference>
<dbReference type="HOGENOM" id="CLU_019704_0_2_7"/>
<dbReference type="OrthoDB" id="9810298at2"/>
<dbReference type="PhylomeDB" id="Q72AV0"/>
<dbReference type="UniPathway" id="UPA00251">
    <property type="reaction ID" value="UER00319"/>
</dbReference>
<dbReference type="Proteomes" id="UP000002194">
    <property type="component" value="Chromosome"/>
</dbReference>
<dbReference type="GO" id="GO:0005737">
    <property type="term" value="C:cytoplasm"/>
    <property type="evidence" value="ECO:0007669"/>
    <property type="project" value="TreeGrafter"/>
</dbReference>
<dbReference type="GO" id="GO:0004418">
    <property type="term" value="F:hydroxymethylbilane synthase activity"/>
    <property type="evidence" value="ECO:0007669"/>
    <property type="project" value="UniProtKB-UniRule"/>
</dbReference>
<dbReference type="GO" id="GO:0006782">
    <property type="term" value="P:protoporphyrinogen IX biosynthetic process"/>
    <property type="evidence" value="ECO:0007669"/>
    <property type="project" value="UniProtKB-UniRule"/>
</dbReference>
<dbReference type="CDD" id="cd13646">
    <property type="entry name" value="PBP2_EcHMBS_like"/>
    <property type="match status" value="1"/>
</dbReference>
<dbReference type="FunFam" id="3.40.190.10:FF:000004">
    <property type="entry name" value="Porphobilinogen deaminase"/>
    <property type="match status" value="1"/>
</dbReference>
<dbReference type="FunFam" id="3.40.190.10:FF:000005">
    <property type="entry name" value="Porphobilinogen deaminase"/>
    <property type="match status" value="1"/>
</dbReference>
<dbReference type="Gene3D" id="3.40.190.10">
    <property type="entry name" value="Periplasmic binding protein-like II"/>
    <property type="match status" value="2"/>
</dbReference>
<dbReference type="Gene3D" id="3.30.160.40">
    <property type="entry name" value="Porphobilinogen deaminase, C-terminal domain"/>
    <property type="match status" value="1"/>
</dbReference>
<dbReference type="HAMAP" id="MF_00260">
    <property type="entry name" value="Porphobil_deam"/>
    <property type="match status" value="1"/>
</dbReference>
<dbReference type="InterPro" id="IPR000860">
    <property type="entry name" value="HemC"/>
</dbReference>
<dbReference type="InterPro" id="IPR022419">
    <property type="entry name" value="Porphobilin_deaminase_cofac_BS"/>
</dbReference>
<dbReference type="InterPro" id="IPR022417">
    <property type="entry name" value="Porphobilin_deaminase_N"/>
</dbReference>
<dbReference type="InterPro" id="IPR022418">
    <property type="entry name" value="Porphobilinogen_deaminase_C"/>
</dbReference>
<dbReference type="InterPro" id="IPR036803">
    <property type="entry name" value="Porphobilinogen_deaminase_C_sf"/>
</dbReference>
<dbReference type="NCBIfam" id="TIGR00212">
    <property type="entry name" value="hemC"/>
    <property type="match status" value="1"/>
</dbReference>
<dbReference type="PANTHER" id="PTHR11557">
    <property type="entry name" value="PORPHOBILINOGEN DEAMINASE"/>
    <property type="match status" value="1"/>
</dbReference>
<dbReference type="PANTHER" id="PTHR11557:SF0">
    <property type="entry name" value="PORPHOBILINOGEN DEAMINASE"/>
    <property type="match status" value="1"/>
</dbReference>
<dbReference type="Pfam" id="PF01379">
    <property type="entry name" value="Porphobil_deam"/>
    <property type="match status" value="1"/>
</dbReference>
<dbReference type="Pfam" id="PF03900">
    <property type="entry name" value="Porphobil_deamC"/>
    <property type="match status" value="1"/>
</dbReference>
<dbReference type="PIRSF" id="PIRSF001438">
    <property type="entry name" value="4pyrrol_synth_OHMeBilane_synth"/>
    <property type="match status" value="1"/>
</dbReference>
<dbReference type="PRINTS" id="PR00151">
    <property type="entry name" value="PORPHBDMNASE"/>
</dbReference>
<dbReference type="SUPFAM" id="SSF53850">
    <property type="entry name" value="Periplasmic binding protein-like II"/>
    <property type="match status" value="1"/>
</dbReference>
<dbReference type="SUPFAM" id="SSF54782">
    <property type="entry name" value="Porphobilinogen deaminase (hydroxymethylbilane synthase), C-terminal domain"/>
    <property type="match status" value="1"/>
</dbReference>
<dbReference type="PROSITE" id="PS00533">
    <property type="entry name" value="PORPHOBILINOGEN_DEAM"/>
    <property type="match status" value="1"/>
</dbReference>
<accession>Q72AV0</accession>
<feature type="chain" id="PRO_0000142933" description="Porphobilinogen deaminase">
    <location>
        <begin position="1"/>
        <end position="315"/>
    </location>
</feature>
<feature type="modified residue" description="S-(dipyrrolylmethanemethyl)cysteine" evidence="1">
    <location>
        <position position="241"/>
    </location>
</feature>